<sequence>MDPYKVIIRPVVTEKAISLIEKENKLTFIVDRRATKQDIKRAVEEIFNVKVEKVNTLITPRGEKKAYVKLKPEYSASEVAARLGLF</sequence>
<protein>
    <recommendedName>
        <fullName evidence="1">Large ribosomal subunit protein uL23</fullName>
    </recommendedName>
    <alternativeName>
        <fullName>50S ribosomal protein L23</fullName>
    </alternativeName>
</protein>
<proteinExistence type="evidence at protein level"/>
<dbReference type="EMBL" id="AE009950">
    <property type="protein sequence ID" value="AAL81947.1"/>
    <property type="status" value="ALT_INIT"/>
    <property type="molecule type" value="Genomic_DNA"/>
</dbReference>
<dbReference type="RefSeq" id="WP_014835564.1">
    <property type="nucleotide sequence ID" value="NZ_CP023154.1"/>
</dbReference>
<dbReference type="PDB" id="4V6U">
    <property type="method" value="EM"/>
    <property type="resolution" value="6.60 A"/>
    <property type="chains" value="BT=1-86"/>
</dbReference>
<dbReference type="PDBsum" id="4V6U"/>
<dbReference type="SMR" id="Q8U000"/>
<dbReference type="STRING" id="186497.PF1823"/>
<dbReference type="PaxDb" id="186497-PF1823"/>
<dbReference type="KEGG" id="pfu:PF1823"/>
<dbReference type="PATRIC" id="fig|186497.12.peg.1894"/>
<dbReference type="eggNOG" id="arCOG04072">
    <property type="taxonomic scope" value="Archaea"/>
</dbReference>
<dbReference type="HOGENOM" id="CLU_037562_4_2_2"/>
<dbReference type="OrthoDB" id="7751at2157"/>
<dbReference type="PhylomeDB" id="Q8U000"/>
<dbReference type="Proteomes" id="UP000001013">
    <property type="component" value="Chromosome"/>
</dbReference>
<dbReference type="GO" id="GO:1990904">
    <property type="term" value="C:ribonucleoprotein complex"/>
    <property type="evidence" value="ECO:0007669"/>
    <property type="project" value="UniProtKB-KW"/>
</dbReference>
<dbReference type="GO" id="GO:0005840">
    <property type="term" value="C:ribosome"/>
    <property type="evidence" value="ECO:0007669"/>
    <property type="project" value="UniProtKB-KW"/>
</dbReference>
<dbReference type="GO" id="GO:0019843">
    <property type="term" value="F:rRNA binding"/>
    <property type="evidence" value="ECO:0007669"/>
    <property type="project" value="UniProtKB-UniRule"/>
</dbReference>
<dbReference type="GO" id="GO:0003735">
    <property type="term" value="F:structural constituent of ribosome"/>
    <property type="evidence" value="ECO:0007669"/>
    <property type="project" value="InterPro"/>
</dbReference>
<dbReference type="GO" id="GO:0006412">
    <property type="term" value="P:translation"/>
    <property type="evidence" value="ECO:0007669"/>
    <property type="project" value="UniProtKB-UniRule"/>
</dbReference>
<dbReference type="FunFam" id="3.30.70.330:FF:001084">
    <property type="entry name" value="50S ribosomal protein L23"/>
    <property type="match status" value="1"/>
</dbReference>
<dbReference type="Gene3D" id="3.30.70.330">
    <property type="match status" value="1"/>
</dbReference>
<dbReference type="HAMAP" id="MF_01369_A">
    <property type="entry name" value="Ribosomal_uL23_A"/>
    <property type="match status" value="1"/>
</dbReference>
<dbReference type="HAMAP" id="MF_01369_B">
    <property type="entry name" value="Ribosomal_uL23_B"/>
    <property type="match status" value="1"/>
</dbReference>
<dbReference type="InterPro" id="IPR012677">
    <property type="entry name" value="Nucleotide-bd_a/b_plait_sf"/>
</dbReference>
<dbReference type="InterPro" id="IPR019985">
    <property type="entry name" value="Ribosomal_uL23"/>
</dbReference>
<dbReference type="InterPro" id="IPR013025">
    <property type="entry name" value="Ribosomal_uL23-like"/>
</dbReference>
<dbReference type="InterPro" id="IPR012678">
    <property type="entry name" value="Ribosomal_uL23/eL15/eS24_sf"/>
</dbReference>
<dbReference type="InterPro" id="IPR001014">
    <property type="entry name" value="Ribosomal_uL23_CS"/>
</dbReference>
<dbReference type="NCBIfam" id="NF011118">
    <property type="entry name" value="PRK14548.1"/>
    <property type="match status" value="1"/>
</dbReference>
<dbReference type="NCBIfam" id="TIGR03636">
    <property type="entry name" value="uL23_arch"/>
    <property type="match status" value="1"/>
</dbReference>
<dbReference type="PANTHER" id="PTHR11620">
    <property type="entry name" value="60S RIBOSOMAL PROTEIN L23A"/>
    <property type="match status" value="1"/>
</dbReference>
<dbReference type="Pfam" id="PF00276">
    <property type="entry name" value="Ribosomal_L23"/>
    <property type="match status" value="1"/>
</dbReference>
<dbReference type="SUPFAM" id="SSF54189">
    <property type="entry name" value="Ribosomal proteins S24e, L23 and L15e"/>
    <property type="match status" value="1"/>
</dbReference>
<dbReference type="PROSITE" id="PS00050">
    <property type="entry name" value="RIBOSOMAL_L23"/>
    <property type="match status" value="1"/>
</dbReference>
<reference key="1">
    <citation type="journal article" date="1999" name="Genetics">
        <title>Divergence of the hyperthermophilic archaea Pyrococcus furiosus and P. horikoshii inferred from complete genomic sequences.</title>
        <authorList>
            <person name="Maeder D.L."/>
            <person name="Weiss R.B."/>
            <person name="Dunn D.M."/>
            <person name="Cherry J.L."/>
            <person name="Gonzalez J.M."/>
            <person name="DiRuggiero J."/>
            <person name="Robb F.T."/>
        </authorList>
    </citation>
    <scope>NUCLEOTIDE SEQUENCE [LARGE SCALE GENOMIC DNA]</scope>
    <source>
        <strain>ATCC 43587 / DSM 3638 / JCM 8422 / Vc1</strain>
    </source>
</reference>
<reference evidence="4" key="2">
    <citation type="journal article" date="2013" name="Nucleic Acids Res.">
        <title>Promiscuous behaviour of archaeal ribosomal proteins: implications for eukaryotic ribosome evolution.</title>
        <authorList>
            <person name="Armache J.P."/>
            <person name="Anger A.M."/>
            <person name="Marquez V."/>
            <person name="Franckenberg S."/>
            <person name="Frohlich T."/>
            <person name="Villa E."/>
            <person name="Berninghausen O."/>
            <person name="Thomm M."/>
            <person name="Arnold G.J."/>
            <person name="Beckmann R."/>
            <person name="Wilson D.N."/>
        </authorList>
    </citation>
    <scope>STRUCTURE BY ELECTRON MICROSCOPY (6.60 ANGSTROMS) IN THE 70S RIBOSOME</scope>
    <scope>SUBUNIT</scope>
</reference>
<gene>
    <name evidence="1" type="primary">rpl23</name>
    <name type="ordered locus">PF1823</name>
</gene>
<organism>
    <name type="scientific">Pyrococcus furiosus (strain ATCC 43587 / DSM 3638 / JCM 8422 / Vc1)</name>
    <dbReference type="NCBI Taxonomy" id="186497"/>
    <lineage>
        <taxon>Archaea</taxon>
        <taxon>Methanobacteriati</taxon>
        <taxon>Methanobacteriota</taxon>
        <taxon>Thermococci</taxon>
        <taxon>Thermococcales</taxon>
        <taxon>Thermococcaceae</taxon>
        <taxon>Pyrococcus</taxon>
    </lineage>
</organism>
<comment type="function">
    <text evidence="1">Binds to 23S rRNA. One of the proteins that surrounds the polypeptide exit tunnel on the outside of the ribosome.</text>
</comment>
<comment type="subunit">
    <text evidence="1 2">Part of the 50S ribosomal subunit (PubMed:23222135). Contacts protein L29.</text>
</comment>
<comment type="similarity">
    <text evidence="1">Belongs to the universal ribosomal protein uL23 family.</text>
</comment>
<comment type="sequence caution" evidence="3">
    <conflict type="erroneous initiation">
        <sequence resource="EMBL-CDS" id="AAL81947"/>
    </conflict>
    <text>Extended N-terminus.</text>
</comment>
<name>RL23_PYRFU</name>
<keyword id="KW-0002">3D-structure</keyword>
<keyword id="KW-1185">Reference proteome</keyword>
<keyword id="KW-0687">Ribonucleoprotein</keyword>
<keyword id="KW-0689">Ribosomal protein</keyword>
<keyword id="KW-0694">RNA-binding</keyword>
<keyword id="KW-0699">rRNA-binding</keyword>
<evidence type="ECO:0000255" key="1">
    <source>
        <dbReference type="HAMAP-Rule" id="MF_01369"/>
    </source>
</evidence>
<evidence type="ECO:0000269" key="2">
    <source>
    </source>
</evidence>
<evidence type="ECO:0000305" key="3"/>
<evidence type="ECO:0007744" key="4">
    <source>
        <dbReference type="PDB" id="4V6U"/>
    </source>
</evidence>
<accession>Q8U000</accession>
<feature type="chain" id="PRO_0000272953" description="Large ribosomal subunit protein uL23">
    <location>
        <begin position="1"/>
        <end position="86"/>
    </location>
</feature>